<accession>Q03HF6</accession>
<reference key="1">
    <citation type="journal article" date="2006" name="Proc. Natl. Acad. Sci. U.S.A.">
        <title>Comparative genomics of the lactic acid bacteria.</title>
        <authorList>
            <person name="Makarova K.S."/>
            <person name="Slesarev A."/>
            <person name="Wolf Y.I."/>
            <person name="Sorokin A."/>
            <person name="Mirkin B."/>
            <person name="Koonin E.V."/>
            <person name="Pavlov A."/>
            <person name="Pavlova N."/>
            <person name="Karamychev V."/>
            <person name="Polouchine N."/>
            <person name="Shakhova V."/>
            <person name="Grigoriev I."/>
            <person name="Lou Y."/>
            <person name="Rohksar D."/>
            <person name="Lucas S."/>
            <person name="Huang K."/>
            <person name="Goodstein D.M."/>
            <person name="Hawkins T."/>
            <person name="Plengvidhya V."/>
            <person name="Welker D."/>
            <person name="Hughes J."/>
            <person name="Goh Y."/>
            <person name="Benson A."/>
            <person name="Baldwin K."/>
            <person name="Lee J.-H."/>
            <person name="Diaz-Muniz I."/>
            <person name="Dosti B."/>
            <person name="Smeianov V."/>
            <person name="Wechter W."/>
            <person name="Barabote R."/>
            <person name="Lorca G."/>
            <person name="Altermann E."/>
            <person name="Barrangou R."/>
            <person name="Ganesan B."/>
            <person name="Xie Y."/>
            <person name="Rawsthorne H."/>
            <person name="Tamir D."/>
            <person name="Parker C."/>
            <person name="Breidt F."/>
            <person name="Broadbent J.R."/>
            <person name="Hutkins R."/>
            <person name="O'Sullivan D."/>
            <person name="Steele J."/>
            <person name="Unlu G."/>
            <person name="Saier M.H. Jr."/>
            <person name="Klaenhammer T."/>
            <person name="Richardson P."/>
            <person name="Kozyavkin S."/>
            <person name="Weimer B.C."/>
            <person name="Mills D.A."/>
        </authorList>
    </citation>
    <scope>NUCLEOTIDE SEQUENCE [LARGE SCALE GENOMIC DNA]</scope>
    <source>
        <strain>ATCC 25745 / CCUG 21536 / LMG 10740 / 183-1w</strain>
    </source>
</reference>
<comment type="function">
    <text evidence="1">Specifically dimethylates two adjacent adenosines (A1518 and A1519) in the loop of a conserved hairpin near the 3'-end of 16S rRNA in the 30S particle. May play a critical role in biogenesis of 30S subunits.</text>
</comment>
<comment type="catalytic activity">
    <reaction evidence="1">
        <text>adenosine(1518)/adenosine(1519) in 16S rRNA + 4 S-adenosyl-L-methionine = N(6)-dimethyladenosine(1518)/N(6)-dimethyladenosine(1519) in 16S rRNA + 4 S-adenosyl-L-homocysteine + 4 H(+)</text>
        <dbReference type="Rhea" id="RHEA:19609"/>
        <dbReference type="Rhea" id="RHEA-COMP:10232"/>
        <dbReference type="Rhea" id="RHEA-COMP:10233"/>
        <dbReference type="ChEBI" id="CHEBI:15378"/>
        <dbReference type="ChEBI" id="CHEBI:57856"/>
        <dbReference type="ChEBI" id="CHEBI:59789"/>
        <dbReference type="ChEBI" id="CHEBI:74411"/>
        <dbReference type="ChEBI" id="CHEBI:74493"/>
        <dbReference type="EC" id="2.1.1.182"/>
    </reaction>
</comment>
<comment type="subcellular location">
    <subcellularLocation>
        <location evidence="1">Cytoplasm</location>
    </subcellularLocation>
</comment>
<comment type="similarity">
    <text evidence="1">Belongs to the class I-like SAM-binding methyltransferase superfamily. rRNA adenine N(6)-methyltransferase family. RsmA subfamily.</text>
</comment>
<name>RSMA_PEDPA</name>
<dbReference type="EC" id="2.1.1.182" evidence="1"/>
<dbReference type="EMBL" id="CP000422">
    <property type="protein sequence ID" value="ABJ67366.1"/>
    <property type="molecule type" value="Genomic_DNA"/>
</dbReference>
<dbReference type="RefSeq" id="WP_011672971.1">
    <property type="nucleotide sequence ID" value="NC_008525.1"/>
</dbReference>
<dbReference type="SMR" id="Q03HF6"/>
<dbReference type="STRING" id="278197.PEPE_0269"/>
<dbReference type="GeneID" id="33062618"/>
<dbReference type="KEGG" id="ppe:PEPE_0269"/>
<dbReference type="eggNOG" id="COG0030">
    <property type="taxonomic scope" value="Bacteria"/>
</dbReference>
<dbReference type="HOGENOM" id="CLU_041220_0_0_9"/>
<dbReference type="OrthoDB" id="9814755at2"/>
<dbReference type="Proteomes" id="UP000000773">
    <property type="component" value="Chromosome"/>
</dbReference>
<dbReference type="GO" id="GO:0005829">
    <property type="term" value="C:cytosol"/>
    <property type="evidence" value="ECO:0007669"/>
    <property type="project" value="TreeGrafter"/>
</dbReference>
<dbReference type="GO" id="GO:0052908">
    <property type="term" value="F:16S rRNA (adenine(1518)-N(6)/adenine(1519)-N(6))-dimethyltransferase activity"/>
    <property type="evidence" value="ECO:0007669"/>
    <property type="project" value="UniProtKB-EC"/>
</dbReference>
<dbReference type="GO" id="GO:0003723">
    <property type="term" value="F:RNA binding"/>
    <property type="evidence" value="ECO:0007669"/>
    <property type="project" value="UniProtKB-KW"/>
</dbReference>
<dbReference type="CDD" id="cd02440">
    <property type="entry name" value="AdoMet_MTases"/>
    <property type="match status" value="1"/>
</dbReference>
<dbReference type="FunFam" id="3.40.50.150:FF:000023">
    <property type="entry name" value="Ribosomal RNA small subunit methyltransferase A"/>
    <property type="match status" value="1"/>
</dbReference>
<dbReference type="Gene3D" id="1.10.8.100">
    <property type="entry name" value="Ribosomal RNA adenine dimethylase-like, domain 2"/>
    <property type="match status" value="1"/>
</dbReference>
<dbReference type="Gene3D" id="3.40.50.150">
    <property type="entry name" value="Vaccinia Virus protein VP39"/>
    <property type="match status" value="1"/>
</dbReference>
<dbReference type="HAMAP" id="MF_00607">
    <property type="entry name" value="16SrRNA_methyltr_A"/>
    <property type="match status" value="1"/>
</dbReference>
<dbReference type="InterPro" id="IPR001737">
    <property type="entry name" value="KsgA/Erm"/>
</dbReference>
<dbReference type="InterPro" id="IPR023165">
    <property type="entry name" value="rRNA_Ade_diMease-like_C"/>
</dbReference>
<dbReference type="InterPro" id="IPR020596">
    <property type="entry name" value="rRNA_Ade_Mease_Trfase_CS"/>
</dbReference>
<dbReference type="InterPro" id="IPR020598">
    <property type="entry name" value="rRNA_Ade_methylase_Trfase_N"/>
</dbReference>
<dbReference type="InterPro" id="IPR011530">
    <property type="entry name" value="rRNA_adenine_dimethylase"/>
</dbReference>
<dbReference type="InterPro" id="IPR029063">
    <property type="entry name" value="SAM-dependent_MTases_sf"/>
</dbReference>
<dbReference type="NCBIfam" id="TIGR00755">
    <property type="entry name" value="ksgA"/>
    <property type="match status" value="1"/>
</dbReference>
<dbReference type="PANTHER" id="PTHR11727">
    <property type="entry name" value="DIMETHYLADENOSINE TRANSFERASE"/>
    <property type="match status" value="1"/>
</dbReference>
<dbReference type="PANTHER" id="PTHR11727:SF7">
    <property type="entry name" value="DIMETHYLADENOSINE TRANSFERASE-RELATED"/>
    <property type="match status" value="1"/>
</dbReference>
<dbReference type="Pfam" id="PF00398">
    <property type="entry name" value="RrnaAD"/>
    <property type="match status" value="1"/>
</dbReference>
<dbReference type="SMART" id="SM00650">
    <property type="entry name" value="rADc"/>
    <property type="match status" value="1"/>
</dbReference>
<dbReference type="SUPFAM" id="SSF53335">
    <property type="entry name" value="S-adenosyl-L-methionine-dependent methyltransferases"/>
    <property type="match status" value="1"/>
</dbReference>
<dbReference type="PROSITE" id="PS01131">
    <property type="entry name" value="RRNA_A_DIMETH"/>
    <property type="match status" value="1"/>
</dbReference>
<dbReference type="PROSITE" id="PS51689">
    <property type="entry name" value="SAM_RNA_A_N6_MT"/>
    <property type="match status" value="1"/>
</dbReference>
<sequence length="297" mass="33708">MNNQMDIGNPTRTRAILEKYGLSAKKSLGQNFLTDPNVLLNIVDAAEVSPEDDVIEVGPGIGSLTEQIAKRAHHVLAFEIDRNLMNVLDETLSPYDNITVVNQDVLKANVNEEVENHLDGKRRLKLVANLPYYITTPILKTFMASTLPIDKMVVMMQKEVAERLTAQPGDKEYGSLSVVVQYRMNTQIEFDVSSKVFVPRPKVDSAIVSLTPRAGWEVMPEDDKDFFKTVHGCFMHRRKNIWNNMQGLYGKEPEIKAKIQNVLDDLGIDPQVRPERLTVLDFIKLHNRIQIEGLKRK</sequence>
<proteinExistence type="inferred from homology"/>
<protein>
    <recommendedName>
        <fullName evidence="1">Ribosomal RNA small subunit methyltransferase A</fullName>
        <ecNumber evidence="1">2.1.1.182</ecNumber>
    </recommendedName>
    <alternativeName>
        <fullName evidence="1">16S rRNA (adenine(1518)-N(6)/adenine(1519)-N(6))-dimethyltransferase</fullName>
    </alternativeName>
    <alternativeName>
        <fullName evidence="1">16S rRNA dimethyladenosine transferase</fullName>
    </alternativeName>
    <alternativeName>
        <fullName evidence="1">16S rRNA dimethylase</fullName>
    </alternativeName>
    <alternativeName>
        <fullName evidence="1">S-adenosylmethionine-6-N', N'-adenosyl(rRNA) dimethyltransferase</fullName>
    </alternativeName>
</protein>
<organism>
    <name type="scientific">Pediococcus pentosaceus (strain ATCC 25745 / CCUG 21536 / LMG 10740 / 183-1w)</name>
    <dbReference type="NCBI Taxonomy" id="278197"/>
    <lineage>
        <taxon>Bacteria</taxon>
        <taxon>Bacillati</taxon>
        <taxon>Bacillota</taxon>
        <taxon>Bacilli</taxon>
        <taxon>Lactobacillales</taxon>
        <taxon>Lactobacillaceae</taxon>
        <taxon>Pediococcus</taxon>
    </lineage>
</organism>
<gene>
    <name evidence="1" type="primary">rsmA</name>
    <name evidence="1" type="synonym">ksgA</name>
    <name type="ordered locus">PEPE_0269</name>
</gene>
<feature type="chain" id="PRO_1000056648" description="Ribosomal RNA small subunit methyltransferase A">
    <location>
        <begin position="1"/>
        <end position="297"/>
    </location>
</feature>
<feature type="binding site" evidence="1">
    <location>
        <position position="31"/>
    </location>
    <ligand>
        <name>S-adenosyl-L-methionine</name>
        <dbReference type="ChEBI" id="CHEBI:59789"/>
    </ligand>
</feature>
<feature type="binding site" evidence="1">
    <location>
        <position position="33"/>
    </location>
    <ligand>
        <name>S-adenosyl-L-methionine</name>
        <dbReference type="ChEBI" id="CHEBI:59789"/>
    </ligand>
</feature>
<feature type="binding site" evidence="1">
    <location>
        <position position="58"/>
    </location>
    <ligand>
        <name>S-adenosyl-L-methionine</name>
        <dbReference type="ChEBI" id="CHEBI:59789"/>
    </ligand>
</feature>
<feature type="binding site" evidence="1">
    <location>
        <position position="79"/>
    </location>
    <ligand>
        <name>S-adenosyl-L-methionine</name>
        <dbReference type="ChEBI" id="CHEBI:59789"/>
    </ligand>
</feature>
<feature type="binding site" evidence="1">
    <location>
        <position position="104"/>
    </location>
    <ligand>
        <name>S-adenosyl-L-methionine</name>
        <dbReference type="ChEBI" id="CHEBI:59789"/>
    </ligand>
</feature>
<feature type="binding site" evidence="1">
    <location>
        <position position="129"/>
    </location>
    <ligand>
        <name>S-adenosyl-L-methionine</name>
        <dbReference type="ChEBI" id="CHEBI:59789"/>
    </ligand>
</feature>
<keyword id="KW-0963">Cytoplasm</keyword>
<keyword id="KW-0489">Methyltransferase</keyword>
<keyword id="KW-0694">RNA-binding</keyword>
<keyword id="KW-0698">rRNA processing</keyword>
<keyword id="KW-0949">S-adenosyl-L-methionine</keyword>
<keyword id="KW-0808">Transferase</keyword>
<evidence type="ECO:0000255" key="1">
    <source>
        <dbReference type="HAMAP-Rule" id="MF_00607"/>
    </source>
</evidence>